<dbReference type="EMBL" id="AY338363">
    <property type="protein sequence ID" value="AAQ01787.1"/>
    <property type="molecule type" value="Genomic_DNA"/>
</dbReference>
<dbReference type="GO" id="GO:0005789">
    <property type="term" value="C:endoplasmic reticulum membrane"/>
    <property type="evidence" value="ECO:0007669"/>
    <property type="project" value="UniProtKB-SubCell"/>
</dbReference>
<dbReference type="GO" id="GO:0031966">
    <property type="term" value="C:mitochondrial membrane"/>
    <property type="evidence" value="ECO:0007669"/>
    <property type="project" value="UniProtKB-SubCell"/>
</dbReference>
<dbReference type="GO" id="GO:0005886">
    <property type="term" value="C:plasma membrane"/>
    <property type="evidence" value="ECO:0007669"/>
    <property type="project" value="UniProtKB-SubCell"/>
</dbReference>
<dbReference type="GO" id="GO:0008374">
    <property type="term" value="F:O-acyltransferase activity"/>
    <property type="evidence" value="ECO:0007669"/>
    <property type="project" value="TreeGrafter"/>
</dbReference>
<dbReference type="GO" id="GO:0006506">
    <property type="term" value="P:GPI anchor biosynthetic process"/>
    <property type="evidence" value="ECO:0007669"/>
    <property type="project" value="TreeGrafter"/>
</dbReference>
<dbReference type="InterPro" id="IPR051085">
    <property type="entry name" value="MB_O-acyltransferase"/>
</dbReference>
<dbReference type="InterPro" id="IPR004299">
    <property type="entry name" value="MBOAT_fam"/>
</dbReference>
<dbReference type="PANTHER" id="PTHR13285">
    <property type="entry name" value="ACYLTRANSFERASE"/>
    <property type="match status" value="1"/>
</dbReference>
<dbReference type="PANTHER" id="PTHR13285:SF18">
    <property type="entry name" value="PROTEIN-CYSTEINE N-PALMITOYLTRANSFERASE RASP"/>
    <property type="match status" value="1"/>
</dbReference>
<dbReference type="Pfam" id="PF03062">
    <property type="entry name" value="MBOAT"/>
    <property type="match status" value="1"/>
</dbReference>
<comment type="function">
    <text evidence="1 4">Membrane-bound O-acyltransferase involved in the remodeling of glycosylphosphatidylinositol (GPI) anchors. Acts only on GPI-anchored proteins, but not on free GPI lipids. Also involved in lipid metabolism, having profound effects on sphingolipid-sterol-ordered domains integrity and assembly. Involved in cell integrity and apoptosis.</text>
</comment>
<comment type="subcellular location">
    <subcellularLocation>
        <location evidence="1">Cell membrane</location>
        <topology evidence="2">Multi-pass membrane protein</topology>
    </subcellularLocation>
    <subcellularLocation>
        <location evidence="1">Endoplasmic reticulum membrane</location>
        <topology evidence="2">Multi-pass membrane protein</topology>
    </subcellularLocation>
    <subcellularLocation>
        <location evidence="1">Mitochondrion membrane</location>
        <topology evidence="2">Multi-pass membrane protein</topology>
    </subcellularLocation>
</comment>
<comment type="similarity">
    <text evidence="3">Belongs to the membrane-bound acyltransferase family.</text>
</comment>
<accession>Q7Z888</accession>
<reference key="1">
    <citation type="journal article" date="2004" name="FEMS Yeast Res.">
        <title>Yeast orthologues associated with glycerol transport and metabolism.</title>
        <authorList>
            <person name="Neves L."/>
            <person name="Oliveira R."/>
            <person name="Lucas C."/>
        </authorList>
    </citation>
    <scope>NUCLEOTIDE SEQUENCE [GENOMIC DNA]</scope>
    <scope>FUNCTION</scope>
    <source>
        <strain>CBS 7064</strain>
    </source>
</reference>
<protein>
    <recommendedName>
        <fullName>Membrane-bound O-acyltransferase GUP1</fullName>
    </recommendedName>
    <alternativeName>
        <fullName>Glycerol uptake protein 1</fullName>
    </alternativeName>
</protein>
<sequence length="505" mass="59111">MFKAAMDASNETNPNYPKFAHLLSQGWMFGRKVDNSDQQYRFFRDNFPLLCGLVLLHTSLRRGVNLIAGNHKRTGFDFVFGXDIHLCSTRDEFLPYFDSLGYXIFPFLKYIKRNDVATXTYVDXTAILSLFLNDNYXSCTIWNRFYRSWISEVSFQDGMCFSISHCXRMLSYNLDYIEKRKSASEESNLELKNSSSSLSELDDRERLVAPIPLTDYNFVNYMAYITYAPLFIAGPIITFNDYIYQSDYKAMSSVKDYKRTFIYFLRFAFCILVMEFLLHFMYVVAVSKTKAWEGDTPFQLSMLGLFNLNIIWLKLLIPWRLFRLWSLIDGIDPPENMIRCMDNNFSTLAFWRAWHRSYNRWIIRYIYIPLGGGGKYRILNSLCVFSFVAIWHDIELKLLMWGWLVVIFIIPELAATAIFKNYQHEPWYRHVCALGAVINIWMMMLANLFGFCMGKDGTMSLIKTLFTTAVGLRFLFLSLGALFVGSQVMFELREAEKRRGVNVKC</sequence>
<organism>
    <name type="scientific">Millerozyma farinosa</name>
    <name type="common">Yeast</name>
    <name type="synonym">Pichia farinosa</name>
    <dbReference type="NCBI Taxonomy" id="4920"/>
    <lineage>
        <taxon>Eukaryota</taxon>
        <taxon>Fungi</taxon>
        <taxon>Dikarya</taxon>
        <taxon>Ascomycota</taxon>
        <taxon>Saccharomycotina</taxon>
        <taxon>Pichiomycetes</taxon>
        <taxon>Debaryomycetaceae</taxon>
        <taxon>Millerozyma</taxon>
    </lineage>
</organism>
<feature type="chain" id="PRO_0000451587" description="Membrane-bound O-acyltransferase GUP1">
    <location>
        <begin position="1"/>
        <end position="505"/>
    </location>
</feature>
<feature type="topological domain" description="Extracellular" evidence="1">
    <location>
        <begin position="1"/>
        <end position="217"/>
    </location>
</feature>
<feature type="transmembrane region" description="Helical" evidence="2">
    <location>
        <begin position="218"/>
        <end position="238"/>
    </location>
</feature>
<feature type="topological domain" description="Cytoplasmic" evidence="1">
    <location>
        <begin position="239"/>
        <end position="266"/>
    </location>
</feature>
<feature type="transmembrane region" description="Helical" evidence="2">
    <location>
        <begin position="267"/>
        <end position="287"/>
    </location>
</feature>
<feature type="topological domain" description="Extracellular" evidence="1">
    <location>
        <begin position="288"/>
        <end position="296"/>
    </location>
</feature>
<feature type="transmembrane region" description="Helical" evidence="2">
    <location>
        <begin position="297"/>
        <end position="317"/>
    </location>
</feature>
<feature type="topological domain" description="Cytoplasmic" evidence="1">
    <location>
        <begin position="318"/>
        <end position="377"/>
    </location>
</feature>
<feature type="transmembrane region" description="Helical" evidence="2">
    <location>
        <begin position="378"/>
        <end position="398"/>
    </location>
</feature>
<feature type="transmembrane region" description="Helical" evidence="2">
    <location>
        <begin position="399"/>
        <end position="419"/>
    </location>
</feature>
<feature type="topological domain" description="Cytoplasmic" evidence="1">
    <location>
        <begin position="420"/>
        <end position="430"/>
    </location>
</feature>
<feature type="transmembrane region" description="Helical" evidence="2">
    <location>
        <begin position="431"/>
        <end position="451"/>
    </location>
</feature>
<feature type="topological domain" description="Extracellular" evidence="1">
    <location>
        <begin position="452"/>
        <end position="464"/>
    </location>
</feature>
<feature type="transmembrane region" description="Helical" evidence="2">
    <location>
        <begin position="465"/>
        <end position="485"/>
    </location>
</feature>
<feature type="topological domain" description="Cytoplasmic" evidence="1">
    <location>
        <begin position="486"/>
        <end position="505"/>
    </location>
</feature>
<feature type="active site" evidence="1">
    <location>
        <position position="392"/>
    </location>
</feature>
<name>GUP1_MILFA</name>
<proteinExistence type="inferred from homology"/>
<keyword id="KW-1003">Cell membrane</keyword>
<keyword id="KW-0256">Endoplasmic reticulum</keyword>
<keyword id="KW-0472">Membrane</keyword>
<keyword id="KW-0496">Mitochondrion</keyword>
<keyword id="KW-0812">Transmembrane</keyword>
<keyword id="KW-1133">Transmembrane helix</keyword>
<gene>
    <name type="primary">GUP1</name>
</gene>
<evidence type="ECO:0000250" key="1">
    <source>
        <dbReference type="UniProtKB" id="P53154"/>
    </source>
</evidence>
<evidence type="ECO:0000255" key="2"/>
<evidence type="ECO:0000305" key="3"/>
<evidence type="ECO:0000305" key="4">
    <source>
    </source>
</evidence>